<reference key="1">
    <citation type="journal article" date="1983" name="Biotechnology (N.Y.)">
        <title>Structural analysis of nuclear genes coding for the precursor to the small subunit of wheat ribulose-1,5-bisphosphate carboxylase.</title>
        <authorList>
            <person name="Broglie R."/>
            <person name="Coruzzi G."/>
            <person name="Lamppa G."/>
            <person name="Keith B."/>
            <person name="Chua N.H."/>
        </authorList>
    </citation>
    <scope>NUCLEOTIDE SEQUENCE [GENOMIC DNA]</scope>
    <source>
        <strain>cv. Era</strain>
    </source>
</reference>
<feature type="transit peptide" description="Chloroplast" evidence="1">
    <location>
        <begin position="1"/>
        <end position="46"/>
    </location>
</feature>
<feature type="chain" id="PRO_0000031563" description="Ribulose bisphosphate carboxylase small subunit, chloroplastic 2" evidence="1">
    <location>
        <begin position="47"/>
        <end position="175"/>
    </location>
</feature>
<keyword id="KW-0113">Calvin cycle</keyword>
<keyword id="KW-0120">Carbon dioxide fixation</keyword>
<keyword id="KW-0150">Chloroplast</keyword>
<keyword id="KW-0601">Photorespiration</keyword>
<keyword id="KW-0602">Photosynthesis</keyword>
<keyword id="KW-0934">Plastid</keyword>
<keyword id="KW-1185">Reference proteome</keyword>
<keyword id="KW-0809">Transit peptide</keyword>
<protein>
    <recommendedName>
        <fullName evidence="1">Ribulose bisphosphate carboxylase small subunit, chloroplastic 2</fullName>
        <shortName evidence="1">RuBisCO small subunit 2</shortName>
    </recommendedName>
</protein>
<gene>
    <name evidence="1" type="primary">RBCS2</name>
</gene>
<dbReference type="EMBL" id="M37477">
    <property type="protein sequence ID" value="AAA34302.1"/>
    <property type="molecule type" value="Genomic_DNA"/>
</dbReference>
<dbReference type="PIR" id="S00505">
    <property type="entry name" value="RKWTS9"/>
</dbReference>
<dbReference type="SMR" id="P26667"/>
<dbReference type="STRING" id="4565.P26667"/>
<dbReference type="PaxDb" id="4565-Traes_2AS_C3EF3A27F.1"/>
<dbReference type="EnsemblPlants" id="TraesMAC2A03G00597220.1">
    <property type="protein sequence ID" value="TraesMAC2A03G00597220.1"/>
    <property type="gene ID" value="TraesMAC2A03G00597220"/>
</dbReference>
<dbReference type="Gramene" id="TraesMAC2A03G00597220.1">
    <property type="protein sequence ID" value="TraesMAC2A03G00597220.1"/>
    <property type="gene ID" value="TraesMAC2A03G00597220"/>
</dbReference>
<dbReference type="eggNOG" id="ENOG502QT0M">
    <property type="taxonomic scope" value="Eukaryota"/>
</dbReference>
<dbReference type="Proteomes" id="UP000019116">
    <property type="component" value="Unplaced"/>
</dbReference>
<dbReference type="ExpressionAtlas" id="P26667">
    <property type="expression patterns" value="baseline and differential"/>
</dbReference>
<dbReference type="GO" id="GO:0009507">
    <property type="term" value="C:chloroplast"/>
    <property type="evidence" value="ECO:0007669"/>
    <property type="project" value="UniProtKB-SubCell"/>
</dbReference>
<dbReference type="GO" id="GO:0016984">
    <property type="term" value="F:ribulose-bisphosphate carboxylase activity"/>
    <property type="evidence" value="ECO:0007669"/>
    <property type="project" value="UniProtKB-UniRule"/>
</dbReference>
<dbReference type="GO" id="GO:0009853">
    <property type="term" value="P:photorespiration"/>
    <property type="evidence" value="ECO:0007669"/>
    <property type="project" value="UniProtKB-KW"/>
</dbReference>
<dbReference type="GO" id="GO:0019253">
    <property type="term" value="P:reductive pentose-phosphate cycle"/>
    <property type="evidence" value="ECO:0007669"/>
    <property type="project" value="UniProtKB-UniRule"/>
</dbReference>
<dbReference type="CDD" id="cd03527">
    <property type="entry name" value="RuBisCO_small"/>
    <property type="match status" value="1"/>
</dbReference>
<dbReference type="FunFam" id="3.30.190.10:FF:000001">
    <property type="entry name" value="Ribulose bisphosphate carboxylase small chain, chloroplastic"/>
    <property type="match status" value="1"/>
</dbReference>
<dbReference type="Gene3D" id="3.30.190.10">
    <property type="entry name" value="Ribulose bisphosphate carboxylase, small subunit"/>
    <property type="match status" value="1"/>
</dbReference>
<dbReference type="HAMAP" id="MF_00859">
    <property type="entry name" value="RuBisCO_S_bact"/>
    <property type="match status" value="1"/>
</dbReference>
<dbReference type="InterPro" id="IPR024681">
    <property type="entry name" value="RuBisCO_ssu"/>
</dbReference>
<dbReference type="InterPro" id="IPR000894">
    <property type="entry name" value="RuBisCO_ssu_dom"/>
</dbReference>
<dbReference type="InterPro" id="IPR036385">
    <property type="entry name" value="RuBisCO_ssu_sf"/>
</dbReference>
<dbReference type="PANTHER" id="PTHR31262">
    <property type="entry name" value="RIBULOSE BISPHOSPHATE CARBOXYLASE SMALL CHAIN 1, CHLOROPLASTIC"/>
    <property type="match status" value="1"/>
</dbReference>
<dbReference type="PANTHER" id="PTHR31262:SF27">
    <property type="entry name" value="RIBULOSE BISPHOSPHATE CARBOXYLASE SMALL SUBUNIT, CHLOROPLASTIC 2"/>
    <property type="match status" value="1"/>
</dbReference>
<dbReference type="Pfam" id="PF00101">
    <property type="entry name" value="RuBisCO_small"/>
    <property type="match status" value="1"/>
</dbReference>
<dbReference type="PRINTS" id="PR00152">
    <property type="entry name" value="RUBISCOSMALL"/>
</dbReference>
<dbReference type="SMART" id="SM00961">
    <property type="entry name" value="RuBisCO_small"/>
    <property type="match status" value="1"/>
</dbReference>
<dbReference type="SUPFAM" id="SSF55239">
    <property type="entry name" value="RuBisCO, small subunit"/>
    <property type="match status" value="1"/>
</dbReference>
<accession>P26667</accession>
<name>RBS2_WHEAT</name>
<organism>
    <name type="scientific">Triticum aestivum</name>
    <name type="common">Wheat</name>
    <dbReference type="NCBI Taxonomy" id="4565"/>
    <lineage>
        <taxon>Eukaryota</taxon>
        <taxon>Viridiplantae</taxon>
        <taxon>Streptophyta</taxon>
        <taxon>Embryophyta</taxon>
        <taxon>Tracheophyta</taxon>
        <taxon>Spermatophyta</taxon>
        <taxon>Magnoliopsida</taxon>
        <taxon>Liliopsida</taxon>
        <taxon>Poales</taxon>
        <taxon>Poaceae</taxon>
        <taxon>BOP clade</taxon>
        <taxon>Pooideae</taxon>
        <taxon>Triticodae</taxon>
        <taxon>Triticeae</taxon>
        <taxon>Triticinae</taxon>
        <taxon>Triticum</taxon>
    </lineage>
</organism>
<sequence>MAPAVMASSATTVAPFQGLKSTAGLPISCRSGSTGLSSVSNGGRIRCMQVWPIEGIKKFETLSYLPPLSTEALLKQVDYLIRSKWVPCLEFSKVGFVFREHNSSPGYYDGRYWTMWKLPMFGCTDATQVLNEVEEVKKEYPDAYVRVIGFDNMRQVQCVSFIAFRPPGCEESGKA</sequence>
<evidence type="ECO:0000255" key="1">
    <source>
        <dbReference type="HAMAP-Rule" id="MF_00860"/>
    </source>
</evidence>
<comment type="function">
    <text evidence="1">RuBisCO catalyzes two reactions: the carboxylation of D-ribulose 1,5-bisphosphate, the primary event in carbon dioxide fixation, as well as the oxidative fragmentation of the pentose substrate. Both reactions occur simultaneously and in competition at the same active site. Although the small subunit is not catalytic it is essential for maximal activity.</text>
</comment>
<comment type="subunit">
    <text evidence="1">Heterohexadecamer of 8 large and 8 small subunits.</text>
</comment>
<comment type="subcellular location">
    <subcellularLocation>
        <location evidence="1">Plastid</location>
        <location evidence="1">Chloroplast</location>
    </subcellularLocation>
</comment>
<comment type="miscellaneous">
    <text evidence="1">The basic functional RuBisCO is composed of a large chain homodimer in a 'head-to-tail' conformation. In form I RuBisCO this homodimer is arranged in a barrel-like tetramer with the small subunits forming a tetrameric 'cap' on each end of the 'barrel'.</text>
</comment>
<comment type="similarity">
    <text evidence="1">Belongs to the RuBisCO small chain family.</text>
</comment>
<proteinExistence type="inferred from homology"/>